<evidence type="ECO:0000250" key="1"/>
<evidence type="ECO:0000255" key="2"/>
<evidence type="ECO:0000305" key="3"/>
<sequence>PIAGSMVLAAILLKLGGYGIIRMMQVLPTTKTDMFLPFIVLALWGAILANLTCLQQTDLKSLIAYSSISHMGLVVATIIIQTPWGLSGALALMIAHGFTSSALFCLANTTYERTHTRILILTRGLHNILPMATTWWLLANLMNIAIPPTMNFTGELLITSALFNWCPTTIIMLGLSMLITASYSLHMFLSTQMGQTTLNNQTEPTHSREHLLMTLHLIPLMMISMKPELII</sequence>
<dbReference type="EC" id="7.1.1.2"/>
<dbReference type="EMBL" id="U41886">
    <property type="protein sequence ID" value="AAB46649.1"/>
    <property type="molecule type" value="Genomic_DNA"/>
</dbReference>
<dbReference type="SMR" id="O03763"/>
<dbReference type="GO" id="GO:0031966">
    <property type="term" value="C:mitochondrial membrane"/>
    <property type="evidence" value="ECO:0007669"/>
    <property type="project" value="UniProtKB-SubCell"/>
</dbReference>
<dbReference type="GO" id="GO:0008137">
    <property type="term" value="F:NADH dehydrogenase (ubiquinone) activity"/>
    <property type="evidence" value="ECO:0007669"/>
    <property type="project" value="UniProtKB-EC"/>
</dbReference>
<dbReference type="GO" id="GO:0048039">
    <property type="term" value="F:ubiquinone binding"/>
    <property type="evidence" value="ECO:0007669"/>
    <property type="project" value="TreeGrafter"/>
</dbReference>
<dbReference type="GO" id="GO:0042773">
    <property type="term" value="P:ATP synthesis coupled electron transport"/>
    <property type="evidence" value="ECO:0007669"/>
    <property type="project" value="InterPro"/>
</dbReference>
<dbReference type="GO" id="GO:0015990">
    <property type="term" value="P:electron transport coupled proton transport"/>
    <property type="evidence" value="ECO:0007669"/>
    <property type="project" value="TreeGrafter"/>
</dbReference>
<dbReference type="InterPro" id="IPR003918">
    <property type="entry name" value="NADH_UbQ_OxRdtase"/>
</dbReference>
<dbReference type="InterPro" id="IPR001750">
    <property type="entry name" value="ND/Mrp_TM"/>
</dbReference>
<dbReference type="PANTHER" id="PTHR43507">
    <property type="entry name" value="NADH-UBIQUINONE OXIDOREDUCTASE CHAIN 4"/>
    <property type="match status" value="1"/>
</dbReference>
<dbReference type="PANTHER" id="PTHR43507:SF20">
    <property type="entry name" value="NADH-UBIQUINONE OXIDOREDUCTASE CHAIN 4"/>
    <property type="match status" value="1"/>
</dbReference>
<dbReference type="Pfam" id="PF00361">
    <property type="entry name" value="Proton_antipo_M"/>
    <property type="match status" value="1"/>
</dbReference>
<keyword id="KW-0249">Electron transport</keyword>
<keyword id="KW-0472">Membrane</keyword>
<keyword id="KW-0496">Mitochondrion</keyword>
<keyword id="KW-0520">NAD</keyword>
<keyword id="KW-0679">Respiratory chain</keyword>
<keyword id="KW-1278">Translocase</keyword>
<keyword id="KW-0812">Transmembrane</keyword>
<keyword id="KW-1133">Transmembrane helix</keyword>
<keyword id="KW-0813">Transport</keyword>
<keyword id="KW-0830">Ubiquinone</keyword>
<geneLocation type="mitochondrion"/>
<name>NU4M_BOTHY</name>
<organism>
    <name type="scientific">Bothrocophias hyoprora</name>
    <name type="common">Amazonian hognose viper</name>
    <name type="synonym">Porthidium hyoprora</name>
    <dbReference type="NCBI Taxonomy" id="230469"/>
    <lineage>
        <taxon>Eukaryota</taxon>
        <taxon>Metazoa</taxon>
        <taxon>Chordata</taxon>
        <taxon>Craniata</taxon>
        <taxon>Vertebrata</taxon>
        <taxon>Euteleostomi</taxon>
        <taxon>Lepidosauria</taxon>
        <taxon>Squamata</taxon>
        <taxon>Bifurcata</taxon>
        <taxon>Unidentata</taxon>
        <taxon>Episquamata</taxon>
        <taxon>Toxicofera</taxon>
        <taxon>Serpentes</taxon>
        <taxon>Colubroidea</taxon>
        <taxon>Viperidae</taxon>
        <taxon>Crotalinae</taxon>
        <taxon>Bothrocophias</taxon>
    </lineage>
</organism>
<comment type="function">
    <text evidence="1">Core subunit of the mitochondrial membrane respiratory chain NADH dehydrogenase (Complex I) that is believed to belong to the minimal assembly required for catalysis. Complex I functions in the transfer of electrons from NADH to the respiratory chain. The immediate electron acceptor for the enzyme is believed to be ubiquinone (By similarity).</text>
</comment>
<comment type="catalytic activity">
    <reaction>
        <text>a ubiquinone + NADH + 5 H(+)(in) = a ubiquinol + NAD(+) + 4 H(+)(out)</text>
        <dbReference type="Rhea" id="RHEA:29091"/>
        <dbReference type="Rhea" id="RHEA-COMP:9565"/>
        <dbReference type="Rhea" id="RHEA-COMP:9566"/>
        <dbReference type="ChEBI" id="CHEBI:15378"/>
        <dbReference type="ChEBI" id="CHEBI:16389"/>
        <dbReference type="ChEBI" id="CHEBI:17976"/>
        <dbReference type="ChEBI" id="CHEBI:57540"/>
        <dbReference type="ChEBI" id="CHEBI:57945"/>
        <dbReference type="EC" id="7.1.1.2"/>
    </reaction>
</comment>
<comment type="subcellular location">
    <subcellularLocation>
        <location evidence="1">Mitochondrion membrane</location>
        <topology evidence="1">Multi-pass membrane protein</topology>
    </subcellularLocation>
</comment>
<comment type="similarity">
    <text evidence="3">Belongs to the complex I subunit 4 family.</text>
</comment>
<gene>
    <name type="primary">MT-ND4</name>
    <name type="synonym">MTND4</name>
    <name type="synonym">NADH4</name>
    <name type="synonym">ND4</name>
</gene>
<reference key="1">
    <citation type="journal article" date="1996" name="Copeia">
        <title>Crotaline intergeneric relationships based on mitochondrial DNA sequence data.</title>
        <authorList>
            <person name="Kraus F."/>
            <person name="Mink D.G."/>
            <person name="Brown W.M."/>
        </authorList>
    </citation>
    <scope>NUCLEOTIDE SEQUENCE [GENOMIC DNA]</scope>
</reference>
<feature type="chain" id="PRO_0000117976" description="NADH-ubiquinone oxidoreductase chain 4">
    <location>
        <begin position="1" status="less than"/>
        <end position="231" status="greater than"/>
    </location>
</feature>
<feature type="transmembrane region" description="Helical" evidence="2">
    <location>
        <begin position="1"/>
        <end position="21"/>
    </location>
</feature>
<feature type="transmembrane region" description="Helical" evidence="2">
    <location>
        <begin position="34"/>
        <end position="54"/>
    </location>
</feature>
<feature type="transmembrane region" description="Helical" evidence="2">
    <location>
        <begin position="63"/>
        <end position="85"/>
    </location>
</feature>
<feature type="transmembrane region" description="Helical" evidence="2">
    <location>
        <begin position="89"/>
        <end position="111"/>
    </location>
</feature>
<feature type="transmembrane region" description="Helical" evidence="2">
    <location>
        <begin position="128"/>
        <end position="148"/>
    </location>
</feature>
<feature type="transmembrane region" description="Helical" evidence="2">
    <location>
        <begin position="169"/>
        <end position="189"/>
    </location>
</feature>
<feature type="non-terminal residue">
    <location>
        <position position="1"/>
    </location>
</feature>
<feature type="non-terminal residue">
    <location>
        <position position="231"/>
    </location>
</feature>
<protein>
    <recommendedName>
        <fullName>NADH-ubiquinone oxidoreductase chain 4</fullName>
        <ecNumber>7.1.1.2</ecNumber>
    </recommendedName>
    <alternativeName>
        <fullName>NADH dehydrogenase subunit 4</fullName>
    </alternativeName>
</protein>
<accession>O03763</accession>
<proteinExistence type="inferred from homology"/>